<sequence length="210" mass="22610">MRVKICGITQPQQSIAIASLGATALGFICVPNSPRYVTTSQIRAAVAELPADIDTIGVFANSSIVEISQIVVDSGLTGVQLHGDELPDFCYQLRQALPNVEIIKALRIRSLEHLGTAADYTKYVDTLLLDAYHPEQLGGTGKTLDWKILEQFNPNCPWFLAGGLTADNIVEALSQVSPSGVDLSSGVERAPGDKDLDKVSKLFEKLGSRE</sequence>
<organism>
    <name type="scientific">Nostoc punctiforme (strain ATCC 29133 / PCC 73102)</name>
    <dbReference type="NCBI Taxonomy" id="63737"/>
    <lineage>
        <taxon>Bacteria</taxon>
        <taxon>Bacillati</taxon>
        <taxon>Cyanobacteriota</taxon>
        <taxon>Cyanophyceae</taxon>
        <taxon>Nostocales</taxon>
        <taxon>Nostocaceae</taxon>
        <taxon>Nostoc</taxon>
    </lineage>
</organism>
<feature type="chain" id="PRO_1000095928" description="N-(5'-phosphoribosyl)anthranilate isomerase">
    <location>
        <begin position="1"/>
        <end position="210"/>
    </location>
</feature>
<accession>B2J1L6</accession>
<reference key="1">
    <citation type="journal article" date="2013" name="Plant Physiol.">
        <title>A Nostoc punctiforme Sugar Transporter Necessary to Establish a Cyanobacterium-Plant Symbiosis.</title>
        <authorList>
            <person name="Ekman M."/>
            <person name="Picossi S."/>
            <person name="Campbell E.L."/>
            <person name="Meeks J.C."/>
            <person name="Flores E."/>
        </authorList>
    </citation>
    <scope>NUCLEOTIDE SEQUENCE [LARGE SCALE GENOMIC DNA]</scope>
    <source>
        <strain>ATCC 29133 / PCC 73102</strain>
    </source>
</reference>
<comment type="catalytic activity">
    <reaction evidence="1">
        <text>N-(5-phospho-beta-D-ribosyl)anthranilate = 1-(2-carboxyphenylamino)-1-deoxy-D-ribulose 5-phosphate</text>
        <dbReference type="Rhea" id="RHEA:21540"/>
        <dbReference type="ChEBI" id="CHEBI:18277"/>
        <dbReference type="ChEBI" id="CHEBI:58613"/>
        <dbReference type="EC" id="5.3.1.24"/>
    </reaction>
</comment>
<comment type="pathway">
    <text evidence="1">Amino-acid biosynthesis; L-tryptophan biosynthesis; L-tryptophan from chorismate: step 3/5.</text>
</comment>
<comment type="similarity">
    <text evidence="1">Belongs to the TrpF family.</text>
</comment>
<proteinExistence type="inferred from homology"/>
<dbReference type="EC" id="5.3.1.24" evidence="1"/>
<dbReference type="EMBL" id="CP001037">
    <property type="protein sequence ID" value="ACC80377.1"/>
    <property type="molecule type" value="Genomic_DNA"/>
</dbReference>
<dbReference type="RefSeq" id="WP_012408395.1">
    <property type="nucleotide sequence ID" value="NC_010628.1"/>
</dbReference>
<dbReference type="SMR" id="B2J1L6"/>
<dbReference type="STRING" id="63737.Npun_F1706"/>
<dbReference type="EnsemblBacteria" id="ACC80377">
    <property type="protein sequence ID" value="ACC80377"/>
    <property type="gene ID" value="Npun_F1706"/>
</dbReference>
<dbReference type="KEGG" id="npu:Npun_F1706"/>
<dbReference type="eggNOG" id="COG0135">
    <property type="taxonomic scope" value="Bacteria"/>
</dbReference>
<dbReference type="HOGENOM" id="CLU_076364_2_0_3"/>
<dbReference type="OrthoDB" id="9786954at2"/>
<dbReference type="PhylomeDB" id="B2J1L6"/>
<dbReference type="UniPathway" id="UPA00035">
    <property type="reaction ID" value="UER00042"/>
</dbReference>
<dbReference type="Proteomes" id="UP000001191">
    <property type="component" value="Chromosome"/>
</dbReference>
<dbReference type="GO" id="GO:0004640">
    <property type="term" value="F:phosphoribosylanthranilate isomerase activity"/>
    <property type="evidence" value="ECO:0007669"/>
    <property type="project" value="UniProtKB-UniRule"/>
</dbReference>
<dbReference type="GO" id="GO:0000162">
    <property type="term" value="P:L-tryptophan biosynthetic process"/>
    <property type="evidence" value="ECO:0007669"/>
    <property type="project" value="UniProtKB-UniRule"/>
</dbReference>
<dbReference type="CDD" id="cd00405">
    <property type="entry name" value="PRAI"/>
    <property type="match status" value="1"/>
</dbReference>
<dbReference type="Gene3D" id="3.20.20.70">
    <property type="entry name" value="Aldolase class I"/>
    <property type="match status" value="1"/>
</dbReference>
<dbReference type="HAMAP" id="MF_00135">
    <property type="entry name" value="PRAI"/>
    <property type="match status" value="1"/>
</dbReference>
<dbReference type="InterPro" id="IPR013785">
    <property type="entry name" value="Aldolase_TIM"/>
</dbReference>
<dbReference type="InterPro" id="IPR001240">
    <property type="entry name" value="PRAI_dom"/>
</dbReference>
<dbReference type="InterPro" id="IPR011060">
    <property type="entry name" value="RibuloseP-bd_barrel"/>
</dbReference>
<dbReference type="InterPro" id="IPR044643">
    <property type="entry name" value="TrpF_fam"/>
</dbReference>
<dbReference type="NCBIfam" id="NF002298">
    <property type="entry name" value="PRK01222.1-4"/>
    <property type="match status" value="1"/>
</dbReference>
<dbReference type="PANTHER" id="PTHR42894">
    <property type="entry name" value="N-(5'-PHOSPHORIBOSYL)ANTHRANILATE ISOMERASE"/>
    <property type="match status" value="1"/>
</dbReference>
<dbReference type="PANTHER" id="PTHR42894:SF1">
    <property type="entry name" value="N-(5'-PHOSPHORIBOSYL)ANTHRANILATE ISOMERASE"/>
    <property type="match status" value="1"/>
</dbReference>
<dbReference type="Pfam" id="PF00697">
    <property type="entry name" value="PRAI"/>
    <property type="match status" value="1"/>
</dbReference>
<dbReference type="SUPFAM" id="SSF51366">
    <property type="entry name" value="Ribulose-phoshate binding barrel"/>
    <property type="match status" value="1"/>
</dbReference>
<gene>
    <name evidence="1" type="primary">trpF</name>
    <name type="ordered locus">Npun_F1706</name>
</gene>
<protein>
    <recommendedName>
        <fullName evidence="1">N-(5'-phosphoribosyl)anthranilate isomerase</fullName>
        <shortName evidence="1">PRAI</shortName>
        <ecNumber evidence="1">5.3.1.24</ecNumber>
    </recommendedName>
</protein>
<keyword id="KW-0028">Amino-acid biosynthesis</keyword>
<keyword id="KW-0057">Aromatic amino acid biosynthesis</keyword>
<keyword id="KW-0413">Isomerase</keyword>
<keyword id="KW-1185">Reference proteome</keyword>
<keyword id="KW-0822">Tryptophan biosynthesis</keyword>
<evidence type="ECO:0000255" key="1">
    <source>
        <dbReference type="HAMAP-Rule" id="MF_00135"/>
    </source>
</evidence>
<name>TRPF_NOSP7</name>